<gene>
    <name evidence="1" type="primary">prs</name>
    <name type="ordered locus">mlr2685</name>
</gene>
<name>KPRS_RHILO</name>
<evidence type="ECO:0000255" key="1">
    <source>
        <dbReference type="HAMAP-Rule" id="MF_00583"/>
    </source>
</evidence>
<organism>
    <name type="scientific">Mesorhizobium japonicum (strain LMG 29417 / CECT 9101 / MAFF 303099)</name>
    <name type="common">Mesorhizobium loti (strain MAFF 303099)</name>
    <dbReference type="NCBI Taxonomy" id="266835"/>
    <lineage>
        <taxon>Bacteria</taxon>
        <taxon>Pseudomonadati</taxon>
        <taxon>Pseudomonadota</taxon>
        <taxon>Alphaproteobacteria</taxon>
        <taxon>Hyphomicrobiales</taxon>
        <taxon>Phyllobacteriaceae</taxon>
        <taxon>Mesorhizobium</taxon>
    </lineage>
</organism>
<proteinExistence type="inferred from homology"/>
<comment type="function">
    <text evidence="1">Involved in the biosynthesis of the central metabolite phospho-alpha-D-ribosyl-1-pyrophosphate (PRPP) via the transfer of pyrophosphoryl group from ATP to 1-hydroxyl of ribose-5-phosphate (Rib-5-P).</text>
</comment>
<comment type="catalytic activity">
    <reaction evidence="1">
        <text>D-ribose 5-phosphate + ATP = 5-phospho-alpha-D-ribose 1-diphosphate + AMP + H(+)</text>
        <dbReference type="Rhea" id="RHEA:15609"/>
        <dbReference type="ChEBI" id="CHEBI:15378"/>
        <dbReference type="ChEBI" id="CHEBI:30616"/>
        <dbReference type="ChEBI" id="CHEBI:58017"/>
        <dbReference type="ChEBI" id="CHEBI:78346"/>
        <dbReference type="ChEBI" id="CHEBI:456215"/>
        <dbReference type="EC" id="2.7.6.1"/>
    </reaction>
</comment>
<comment type="cofactor">
    <cofactor evidence="1">
        <name>Mg(2+)</name>
        <dbReference type="ChEBI" id="CHEBI:18420"/>
    </cofactor>
    <text evidence="1">Binds 2 Mg(2+) ions per subunit.</text>
</comment>
<comment type="pathway">
    <text evidence="1">Metabolic intermediate biosynthesis; 5-phospho-alpha-D-ribose 1-diphosphate biosynthesis; 5-phospho-alpha-D-ribose 1-diphosphate from D-ribose 5-phosphate (route I): step 1/1.</text>
</comment>
<comment type="subunit">
    <text evidence="1">Homohexamer.</text>
</comment>
<comment type="subcellular location">
    <subcellularLocation>
        <location evidence="1">Cytoplasm</location>
    </subcellularLocation>
</comment>
<comment type="similarity">
    <text evidence="1">Belongs to the ribose-phosphate pyrophosphokinase family. Class I subfamily.</text>
</comment>
<protein>
    <recommendedName>
        <fullName evidence="1">Ribose-phosphate pyrophosphokinase</fullName>
        <shortName evidence="1">RPPK</shortName>
        <ecNumber evidence="1">2.7.6.1</ecNumber>
    </recommendedName>
    <alternativeName>
        <fullName evidence="1">5-phospho-D-ribosyl alpha-1-diphosphate synthase</fullName>
    </alternativeName>
    <alternativeName>
        <fullName evidence="1">Phosphoribosyl diphosphate synthase</fullName>
    </alternativeName>
    <alternativeName>
        <fullName evidence="1">Phosphoribosyl pyrophosphate synthase</fullName>
        <shortName evidence="1">P-Rib-PP synthase</shortName>
        <shortName evidence="1">PRPP synthase</shortName>
        <shortName evidence="1">PRPPase</shortName>
    </alternativeName>
</protein>
<accession>Q98HW3</accession>
<reference key="1">
    <citation type="journal article" date="2000" name="DNA Res.">
        <title>Complete genome structure of the nitrogen-fixing symbiotic bacterium Mesorhizobium loti.</title>
        <authorList>
            <person name="Kaneko T."/>
            <person name="Nakamura Y."/>
            <person name="Sato S."/>
            <person name="Asamizu E."/>
            <person name="Kato T."/>
            <person name="Sasamoto S."/>
            <person name="Watanabe A."/>
            <person name="Idesawa K."/>
            <person name="Ishikawa A."/>
            <person name="Kawashima K."/>
            <person name="Kimura T."/>
            <person name="Kishida Y."/>
            <person name="Kiyokawa C."/>
            <person name="Kohara M."/>
            <person name="Matsumoto M."/>
            <person name="Matsuno A."/>
            <person name="Mochizuki Y."/>
            <person name="Nakayama S."/>
            <person name="Nakazaki N."/>
            <person name="Shimpo S."/>
            <person name="Sugimoto M."/>
            <person name="Takeuchi C."/>
            <person name="Yamada M."/>
            <person name="Tabata S."/>
        </authorList>
    </citation>
    <scope>NUCLEOTIDE SEQUENCE [LARGE SCALE GENOMIC DNA]</scope>
    <source>
        <strain>LMG 29417 / CECT 9101 / MAFF 303099</strain>
    </source>
</reference>
<feature type="chain" id="PRO_0000141180" description="Ribose-phosphate pyrophosphokinase">
    <location>
        <begin position="1"/>
        <end position="311"/>
    </location>
</feature>
<feature type="active site" evidence="1">
    <location>
        <position position="191"/>
    </location>
</feature>
<feature type="binding site" evidence="1">
    <location>
        <begin position="34"/>
        <end position="36"/>
    </location>
    <ligand>
        <name>ATP</name>
        <dbReference type="ChEBI" id="CHEBI:30616"/>
    </ligand>
</feature>
<feature type="binding site" evidence="1">
    <location>
        <begin position="93"/>
        <end position="94"/>
    </location>
    <ligand>
        <name>ATP</name>
        <dbReference type="ChEBI" id="CHEBI:30616"/>
    </ligand>
</feature>
<feature type="binding site" evidence="1">
    <location>
        <position position="127"/>
    </location>
    <ligand>
        <name>Mg(2+)</name>
        <dbReference type="ChEBI" id="CHEBI:18420"/>
        <label>1</label>
    </ligand>
</feature>
<feature type="binding site" evidence="1">
    <location>
        <position position="168"/>
    </location>
    <ligand>
        <name>Mg(2+)</name>
        <dbReference type="ChEBI" id="CHEBI:18420"/>
        <label>2</label>
    </ligand>
</feature>
<feature type="binding site" evidence="1">
    <location>
        <position position="193"/>
    </location>
    <ligand>
        <name>D-ribose 5-phosphate</name>
        <dbReference type="ChEBI" id="CHEBI:78346"/>
    </ligand>
</feature>
<feature type="binding site" evidence="1">
    <location>
        <position position="217"/>
    </location>
    <ligand>
        <name>D-ribose 5-phosphate</name>
        <dbReference type="ChEBI" id="CHEBI:78346"/>
    </ligand>
</feature>
<feature type="binding site" evidence="1">
    <location>
        <begin position="221"/>
        <end position="225"/>
    </location>
    <ligand>
        <name>D-ribose 5-phosphate</name>
        <dbReference type="ChEBI" id="CHEBI:78346"/>
    </ligand>
</feature>
<dbReference type="EC" id="2.7.6.1" evidence="1"/>
<dbReference type="EMBL" id="BA000012">
    <property type="protein sequence ID" value="BAB49753.1"/>
    <property type="molecule type" value="Genomic_DNA"/>
</dbReference>
<dbReference type="RefSeq" id="WP_010911102.1">
    <property type="nucleotide sequence ID" value="NC_002678.2"/>
</dbReference>
<dbReference type="SMR" id="Q98HW3"/>
<dbReference type="KEGG" id="mlo:mlr2685"/>
<dbReference type="eggNOG" id="COG0462">
    <property type="taxonomic scope" value="Bacteria"/>
</dbReference>
<dbReference type="HOGENOM" id="CLU_033546_4_0_5"/>
<dbReference type="UniPathway" id="UPA00087">
    <property type="reaction ID" value="UER00172"/>
</dbReference>
<dbReference type="Proteomes" id="UP000000552">
    <property type="component" value="Chromosome"/>
</dbReference>
<dbReference type="GO" id="GO:0005737">
    <property type="term" value="C:cytoplasm"/>
    <property type="evidence" value="ECO:0007669"/>
    <property type="project" value="UniProtKB-SubCell"/>
</dbReference>
<dbReference type="GO" id="GO:0002189">
    <property type="term" value="C:ribose phosphate diphosphokinase complex"/>
    <property type="evidence" value="ECO:0007669"/>
    <property type="project" value="TreeGrafter"/>
</dbReference>
<dbReference type="GO" id="GO:0005524">
    <property type="term" value="F:ATP binding"/>
    <property type="evidence" value="ECO:0007669"/>
    <property type="project" value="UniProtKB-KW"/>
</dbReference>
<dbReference type="GO" id="GO:0016301">
    <property type="term" value="F:kinase activity"/>
    <property type="evidence" value="ECO:0007669"/>
    <property type="project" value="UniProtKB-KW"/>
</dbReference>
<dbReference type="GO" id="GO:0000287">
    <property type="term" value="F:magnesium ion binding"/>
    <property type="evidence" value="ECO:0007669"/>
    <property type="project" value="UniProtKB-UniRule"/>
</dbReference>
<dbReference type="GO" id="GO:0004749">
    <property type="term" value="F:ribose phosphate diphosphokinase activity"/>
    <property type="evidence" value="ECO:0007669"/>
    <property type="project" value="UniProtKB-UniRule"/>
</dbReference>
<dbReference type="GO" id="GO:0006015">
    <property type="term" value="P:5-phosphoribose 1-diphosphate biosynthetic process"/>
    <property type="evidence" value="ECO:0007669"/>
    <property type="project" value="UniProtKB-UniRule"/>
</dbReference>
<dbReference type="GO" id="GO:0006164">
    <property type="term" value="P:purine nucleotide biosynthetic process"/>
    <property type="evidence" value="ECO:0007669"/>
    <property type="project" value="TreeGrafter"/>
</dbReference>
<dbReference type="GO" id="GO:0009156">
    <property type="term" value="P:ribonucleoside monophosphate biosynthetic process"/>
    <property type="evidence" value="ECO:0007669"/>
    <property type="project" value="InterPro"/>
</dbReference>
<dbReference type="CDD" id="cd06223">
    <property type="entry name" value="PRTases_typeI"/>
    <property type="match status" value="1"/>
</dbReference>
<dbReference type="FunFam" id="3.40.50.2020:FF:000001">
    <property type="entry name" value="Ribose-phosphate pyrophosphokinase"/>
    <property type="match status" value="1"/>
</dbReference>
<dbReference type="Gene3D" id="3.40.50.2020">
    <property type="match status" value="2"/>
</dbReference>
<dbReference type="HAMAP" id="MF_00583_B">
    <property type="entry name" value="RibP_PPkinase_B"/>
    <property type="match status" value="1"/>
</dbReference>
<dbReference type="InterPro" id="IPR000842">
    <property type="entry name" value="PRib_PP_synth_CS"/>
</dbReference>
<dbReference type="InterPro" id="IPR029099">
    <property type="entry name" value="Pribosyltran_N"/>
</dbReference>
<dbReference type="InterPro" id="IPR000836">
    <property type="entry name" value="PRibTrfase_dom"/>
</dbReference>
<dbReference type="InterPro" id="IPR029057">
    <property type="entry name" value="PRTase-like"/>
</dbReference>
<dbReference type="InterPro" id="IPR005946">
    <property type="entry name" value="Rib-P_diPkinase"/>
</dbReference>
<dbReference type="InterPro" id="IPR037515">
    <property type="entry name" value="Rib-P_diPkinase_bac"/>
</dbReference>
<dbReference type="NCBIfam" id="NF002320">
    <property type="entry name" value="PRK01259.1"/>
    <property type="match status" value="1"/>
</dbReference>
<dbReference type="NCBIfam" id="TIGR01251">
    <property type="entry name" value="ribP_PPkin"/>
    <property type="match status" value="1"/>
</dbReference>
<dbReference type="PANTHER" id="PTHR10210">
    <property type="entry name" value="RIBOSE-PHOSPHATE DIPHOSPHOKINASE FAMILY MEMBER"/>
    <property type="match status" value="1"/>
</dbReference>
<dbReference type="PANTHER" id="PTHR10210:SF41">
    <property type="entry name" value="RIBOSE-PHOSPHATE PYROPHOSPHOKINASE 1, CHLOROPLASTIC"/>
    <property type="match status" value="1"/>
</dbReference>
<dbReference type="Pfam" id="PF14572">
    <property type="entry name" value="Pribosyl_synth"/>
    <property type="match status" value="1"/>
</dbReference>
<dbReference type="Pfam" id="PF13793">
    <property type="entry name" value="Pribosyltran_N"/>
    <property type="match status" value="1"/>
</dbReference>
<dbReference type="SMART" id="SM01400">
    <property type="entry name" value="Pribosyltran_N"/>
    <property type="match status" value="1"/>
</dbReference>
<dbReference type="SUPFAM" id="SSF53271">
    <property type="entry name" value="PRTase-like"/>
    <property type="match status" value="1"/>
</dbReference>
<dbReference type="PROSITE" id="PS00114">
    <property type="entry name" value="PRPP_SYNTHASE"/>
    <property type="match status" value="1"/>
</dbReference>
<keyword id="KW-0067">ATP-binding</keyword>
<keyword id="KW-0963">Cytoplasm</keyword>
<keyword id="KW-0418">Kinase</keyword>
<keyword id="KW-0460">Magnesium</keyword>
<keyword id="KW-0479">Metal-binding</keyword>
<keyword id="KW-0545">Nucleotide biosynthesis</keyword>
<keyword id="KW-0547">Nucleotide-binding</keyword>
<keyword id="KW-0808">Transferase</keyword>
<sequence length="311" mass="33519">MKLFAGNSNRVLAEAVARYLNIPLGKATVRRFADQEIFVEIQENVRGEDVFILQSTSFPTNDHLMELLIMIDAFMRSSAKRITAVIPYFGYARQDRRASGRTPISAKLVANMITRAGVDRVLTLDLHAGQIQGFFDIPTDNLFSVPVMARDVKAKYKQLGNVVVVSPDIGGVVRARALAKRFDAQLAIVDKRRERPGESEVMNIIGAVAGKDCLLIDDIVDSGGTLCNAADALLANGATSVTAYITHGVLSGGAVARISGSKLQELVITDSIQPTQGVLDAPNIRVISIADLMGEAISRTATEESVSSLFD</sequence>